<dbReference type="EC" id="6.1.1.17" evidence="1"/>
<dbReference type="EMBL" id="AM422018">
    <property type="protein sequence ID" value="CAM11832.1"/>
    <property type="molecule type" value="Genomic_DNA"/>
</dbReference>
<dbReference type="SMR" id="B1VA59"/>
<dbReference type="STRING" id="59748.PA0498"/>
<dbReference type="KEGG" id="pal:PA0498"/>
<dbReference type="eggNOG" id="COG0008">
    <property type="taxonomic scope" value="Bacteria"/>
</dbReference>
<dbReference type="Proteomes" id="UP000008323">
    <property type="component" value="Chromosome"/>
</dbReference>
<dbReference type="GO" id="GO:0005829">
    <property type="term" value="C:cytosol"/>
    <property type="evidence" value="ECO:0007669"/>
    <property type="project" value="TreeGrafter"/>
</dbReference>
<dbReference type="GO" id="GO:0005524">
    <property type="term" value="F:ATP binding"/>
    <property type="evidence" value="ECO:0007669"/>
    <property type="project" value="UniProtKB-UniRule"/>
</dbReference>
<dbReference type="GO" id="GO:0004818">
    <property type="term" value="F:glutamate-tRNA ligase activity"/>
    <property type="evidence" value="ECO:0007669"/>
    <property type="project" value="UniProtKB-UniRule"/>
</dbReference>
<dbReference type="GO" id="GO:0000049">
    <property type="term" value="F:tRNA binding"/>
    <property type="evidence" value="ECO:0007669"/>
    <property type="project" value="InterPro"/>
</dbReference>
<dbReference type="GO" id="GO:0008270">
    <property type="term" value="F:zinc ion binding"/>
    <property type="evidence" value="ECO:0007669"/>
    <property type="project" value="InterPro"/>
</dbReference>
<dbReference type="GO" id="GO:0006424">
    <property type="term" value="P:glutamyl-tRNA aminoacylation"/>
    <property type="evidence" value="ECO:0007669"/>
    <property type="project" value="UniProtKB-UniRule"/>
</dbReference>
<dbReference type="CDD" id="cd00808">
    <property type="entry name" value="GluRS_core"/>
    <property type="match status" value="1"/>
</dbReference>
<dbReference type="Gene3D" id="1.10.10.350">
    <property type="match status" value="1"/>
</dbReference>
<dbReference type="Gene3D" id="3.40.50.620">
    <property type="entry name" value="HUPs"/>
    <property type="match status" value="2"/>
</dbReference>
<dbReference type="HAMAP" id="MF_00022">
    <property type="entry name" value="Glu_tRNA_synth_type1"/>
    <property type="match status" value="1"/>
</dbReference>
<dbReference type="InterPro" id="IPR045462">
    <property type="entry name" value="aa-tRNA-synth_I_cd-bd"/>
</dbReference>
<dbReference type="InterPro" id="IPR020751">
    <property type="entry name" value="aa-tRNA-synth_I_codon-bd_sub2"/>
</dbReference>
<dbReference type="InterPro" id="IPR001412">
    <property type="entry name" value="aa-tRNA-synth_I_CS"/>
</dbReference>
<dbReference type="InterPro" id="IPR008925">
    <property type="entry name" value="aa_tRNA-synth_I_cd-bd_sf"/>
</dbReference>
<dbReference type="InterPro" id="IPR004527">
    <property type="entry name" value="Glu-tRNA-ligase_bac/mito"/>
</dbReference>
<dbReference type="InterPro" id="IPR000924">
    <property type="entry name" value="Glu/Gln-tRNA-synth"/>
</dbReference>
<dbReference type="InterPro" id="IPR020058">
    <property type="entry name" value="Glu/Gln-tRNA-synth_Ib_cat-dom"/>
</dbReference>
<dbReference type="InterPro" id="IPR049940">
    <property type="entry name" value="GluQ/Sye"/>
</dbReference>
<dbReference type="InterPro" id="IPR033910">
    <property type="entry name" value="GluRS_core"/>
</dbReference>
<dbReference type="InterPro" id="IPR014729">
    <property type="entry name" value="Rossmann-like_a/b/a_fold"/>
</dbReference>
<dbReference type="NCBIfam" id="TIGR00464">
    <property type="entry name" value="gltX_bact"/>
    <property type="match status" value="1"/>
</dbReference>
<dbReference type="PANTHER" id="PTHR43311">
    <property type="entry name" value="GLUTAMATE--TRNA LIGASE"/>
    <property type="match status" value="1"/>
</dbReference>
<dbReference type="PANTHER" id="PTHR43311:SF2">
    <property type="entry name" value="GLUTAMATE--TRNA LIGASE, MITOCHONDRIAL-RELATED"/>
    <property type="match status" value="1"/>
</dbReference>
<dbReference type="Pfam" id="PF19269">
    <property type="entry name" value="Anticodon_2"/>
    <property type="match status" value="1"/>
</dbReference>
<dbReference type="Pfam" id="PF00749">
    <property type="entry name" value="tRNA-synt_1c"/>
    <property type="match status" value="1"/>
</dbReference>
<dbReference type="PRINTS" id="PR00987">
    <property type="entry name" value="TRNASYNTHGLU"/>
</dbReference>
<dbReference type="SUPFAM" id="SSF48163">
    <property type="entry name" value="An anticodon-binding domain of class I aminoacyl-tRNA synthetases"/>
    <property type="match status" value="1"/>
</dbReference>
<dbReference type="SUPFAM" id="SSF52374">
    <property type="entry name" value="Nucleotidylyl transferase"/>
    <property type="match status" value="1"/>
</dbReference>
<dbReference type="PROSITE" id="PS00178">
    <property type="entry name" value="AA_TRNA_LIGASE_I"/>
    <property type="match status" value="1"/>
</dbReference>
<proteinExistence type="inferred from homology"/>
<organism>
    <name type="scientific">Phytoplasma australiense</name>
    <dbReference type="NCBI Taxonomy" id="59748"/>
    <lineage>
        <taxon>Bacteria</taxon>
        <taxon>Bacillati</taxon>
        <taxon>Mycoplasmatota</taxon>
        <taxon>Mollicutes</taxon>
        <taxon>Acholeplasmatales</taxon>
        <taxon>Acholeplasmataceae</taxon>
        <taxon>Candidatus Phytoplasma</taxon>
        <taxon>16SrXII (Stolbur group)</taxon>
    </lineage>
</organism>
<feature type="chain" id="PRO_0000367736" description="Glutamate--tRNA ligase">
    <location>
        <begin position="1"/>
        <end position="448"/>
    </location>
</feature>
<feature type="short sequence motif" description="'HIGH' region" evidence="1">
    <location>
        <begin position="10"/>
        <end position="20"/>
    </location>
</feature>
<feature type="short sequence motif" description="'KMSKS' region" evidence="1">
    <location>
        <begin position="214"/>
        <end position="218"/>
    </location>
</feature>
<feature type="binding site" evidence="1">
    <location>
        <position position="217"/>
    </location>
    <ligand>
        <name>ATP</name>
        <dbReference type="ChEBI" id="CHEBI:30616"/>
    </ligand>
</feature>
<evidence type="ECO:0000255" key="1">
    <source>
        <dbReference type="HAMAP-Rule" id="MF_00022"/>
    </source>
</evidence>
<comment type="function">
    <text evidence="1">Catalyzes the attachment of glutamate to tRNA(Glu) in a two-step reaction: glutamate is first activated by ATP to form Glu-AMP and then transferred to the acceptor end of tRNA(Glu).</text>
</comment>
<comment type="catalytic activity">
    <reaction evidence="1">
        <text>tRNA(Glu) + L-glutamate + ATP = L-glutamyl-tRNA(Glu) + AMP + diphosphate</text>
        <dbReference type="Rhea" id="RHEA:23540"/>
        <dbReference type="Rhea" id="RHEA-COMP:9663"/>
        <dbReference type="Rhea" id="RHEA-COMP:9680"/>
        <dbReference type="ChEBI" id="CHEBI:29985"/>
        <dbReference type="ChEBI" id="CHEBI:30616"/>
        <dbReference type="ChEBI" id="CHEBI:33019"/>
        <dbReference type="ChEBI" id="CHEBI:78442"/>
        <dbReference type="ChEBI" id="CHEBI:78520"/>
        <dbReference type="ChEBI" id="CHEBI:456215"/>
        <dbReference type="EC" id="6.1.1.17"/>
    </reaction>
</comment>
<comment type="subunit">
    <text evidence="1">Monomer.</text>
</comment>
<comment type="subcellular location">
    <subcellularLocation>
        <location evidence="1">Cytoplasm</location>
    </subcellularLocation>
</comment>
<comment type="similarity">
    <text evidence="1">Belongs to the class-I aminoacyl-tRNA synthetase family. Glutamate--tRNA ligase type 1 subfamily.</text>
</comment>
<protein>
    <recommendedName>
        <fullName evidence="1">Glutamate--tRNA ligase</fullName>
        <ecNumber evidence="1">6.1.1.17</ecNumber>
    </recommendedName>
    <alternativeName>
        <fullName evidence="1">Glutamyl-tRNA synthetase</fullName>
        <shortName evidence="1">GluRS</shortName>
    </alternativeName>
</protein>
<reference key="1">
    <citation type="journal article" date="2008" name="J. Bacteriol.">
        <title>Comparative genome analysis of 'Candidatus Phytoplasma australiense' (subgroup tuf-Australia I; rp-A) and 'Ca. Phytoplasma asteris' strains OY-M and AY-WB.</title>
        <authorList>
            <person name="Tran-Nguyen L.T."/>
            <person name="Kube M."/>
            <person name="Schneider B."/>
            <person name="Reinhardt R."/>
            <person name="Gibb K.S."/>
        </authorList>
    </citation>
    <scope>NUCLEOTIDE SEQUENCE [LARGE SCALE GENOMIC DNA]</scope>
</reference>
<sequence length="448" mass="52517">MNKIRVRYAPSPTGFLHIGNARTALFNYLFAKHHQGDFILRIEDTDLLRNVADGEASQLKNLRWLGIDWKEGPDINGPFGPYRQSERLTIYQKYAFELLEKNLAYRDFEKDKKNFAIRFKVPPNQTFTFCDLIRGKLTFLSKEIEDWVIIKSNGYPSYNFAASIDDHLMQISHIFRGEEHITNTPKQIMIYQSFNWSIPKFAHMTLILNQERKKLSKRDVNVCQFIQDYADLGYLPQSLFNFLSLLGFSPSSCKEILTPQEIISLFDVNRLNKSPAIFDKTKLDFFNNHYLRKTPIDDIVSFIKTKLDFFEVLPINNQKWLTKFILLFQERINYIKQLKDLYHHFFDKNTSLSEEVEQFLKKHDCALSVLTLFYHKLNLVVFEKEAINPIIAEIAQNMKINKKNLFVILRIGATHKMQGPSLALFLELLGKKQVLNNLSKIVELLKNQ</sequence>
<accession>B1VA59</accession>
<keyword id="KW-0030">Aminoacyl-tRNA synthetase</keyword>
<keyword id="KW-0067">ATP-binding</keyword>
<keyword id="KW-0963">Cytoplasm</keyword>
<keyword id="KW-0436">Ligase</keyword>
<keyword id="KW-0547">Nucleotide-binding</keyword>
<keyword id="KW-0648">Protein biosynthesis</keyword>
<keyword id="KW-1185">Reference proteome</keyword>
<gene>
    <name evidence="1" type="primary">gltX</name>
    <name type="ordered locus">PA0498</name>
</gene>
<name>SYE_PHYAS</name>